<name>NOP9_ASPCL</name>
<protein>
    <recommendedName>
        <fullName>Nucleolar protein 9</fullName>
    </recommendedName>
    <alternativeName>
        <fullName>Pumilio domain-containing protein nop9</fullName>
    </alternativeName>
</protein>
<reference key="1">
    <citation type="journal article" date="2008" name="PLoS Genet.">
        <title>Genomic islands in the pathogenic filamentous fungus Aspergillus fumigatus.</title>
        <authorList>
            <person name="Fedorova N.D."/>
            <person name="Khaldi N."/>
            <person name="Joardar V.S."/>
            <person name="Maiti R."/>
            <person name="Amedeo P."/>
            <person name="Anderson M.J."/>
            <person name="Crabtree J."/>
            <person name="Silva J.C."/>
            <person name="Badger J.H."/>
            <person name="Albarraq A."/>
            <person name="Angiuoli S."/>
            <person name="Bussey H."/>
            <person name="Bowyer P."/>
            <person name="Cotty P.J."/>
            <person name="Dyer P.S."/>
            <person name="Egan A."/>
            <person name="Galens K."/>
            <person name="Fraser-Liggett C.M."/>
            <person name="Haas B.J."/>
            <person name="Inman J.M."/>
            <person name="Kent R."/>
            <person name="Lemieux S."/>
            <person name="Malavazi I."/>
            <person name="Orvis J."/>
            <person name="Roemer T."/>
            <person name="Ronning C.M."/>
            <person name="Sundaram J.P."/>
            <person name="Sutton G."/>
            <person name="Turner G."/>
            <person name="Venter J.C."/>
            <person name="White O.R."/>
            <person name="Whitty B.R."/>
            <person name="Youngman P."/>
            <person name="Wolfe K.H."/>
            <person name="Goldman G.H."/>
            <person name="Wortman J.R."/>
            <person name="Jiang B."/>
            <person name="Denning D.W."/>
            <person name="Nierman W.C."/>
        </authorList>
    </citation>
    <scope>NUCLEOTIDE SEQUENCE [LARGE SCALE GENOMIC DNA]</scope>
    <source>
        <strain>ATCC 1007 / CBS 513.65 / DSM 816 / NCTC 3887 / NRRL 1 / QM 1276 / 107</strain>
    </source>
</reference>
<proteinExistence type="inferred from homology"/>
<accession>A1CKL4</accession>
<comment type="function">
    <text evidence="1">RNA-binding nucleolar protein required for pre-rRNA processing. Involved in production of 18S rRNA and assembly of small ribosomal subunit (By similarity).</text>
</comment>
<comment type="subcellular location">
    <subcellularLocation>
        <location evidence="1">Nucleus</location>
        <location evidence="1">Nucleolus</location>
    </subcellularLocation>
</comment>
<comment type="similarity">
    <text evidence="3">Belongs to the NOP9 family.</text>
</comment>
<dbReference type="EMBL" id="DS027056">
    <property type="protein sequence ID" value="EAW09688.1"/>
    <property type="molecule type" value="Genomic_DNA"/>
</dbReference>
<dbReference type="RefSeq" id="XP_001271114.1">
    <property type="nucleotide sequence ID" value="XM_001271113.1"/>
</dbReference>
<dbReference type="SMR" id="A1CKL4"/>
<dbReference type="STRING" id="344612.A1CKL4"/>
<dbReference type="EnsemblFungi" id="EAW09688">
    <property type="protein sequence ID" value="EAW09688"/>
    <property type="gene ID" value="ACLA_039030"/>
</dbReference>
<dbReference type="GeneID" id="4702811"/>
<dbReference type="KEGG" id="act:ACLA_039030"/>
<dbReference type="VEuPathDB" id="FungiDB:ACLA_039030"/>
<dbReference type="eggNOG" id="KOG2188">
    <property type="taxonomic scope" value="Eukaryota"/>
</dbReference>
<dbReference type="HOGENOM" id="CLU_008720_1_1_1"/>
<dbReference type="OMA" id="HHLVRNF"/>
<dbReference type="OrthoDB" id="392571at2759"/>
<dbReference type="Proteomes" id="UP000006701">
    <property type="component" value="Unassembled WGS sequence"/>
</dbReference>
<dbReference type="GO" id="GO:0030686">
    <property type="term" value="C:90S preribosome"/>
    <property type="evidence" value="ECO:0007669"/>
    <property type="project" value="TreeGrafter"/>
</dbReference>
<dbReference type="GO" id="GO:0005730">
    <property type="term" value="C:nucleolus"/>
    <property type="evidence" value="ECO:0007669"/>
    <property type="project" value="UniProtKB-SubCell"/>
</dbReference>
<dbReference type="GO" id="GO:0030688">
    <property type="term" value="C:preribosome, small subunit precursor"/>
    <property type="evidence" value="ECO:0007669"/>
    <property type="project" value="TreeGrafter"/>
</dbReference>
<dbReference type="GO" id="GO:0003723">
    <property type="term" value="F:RNA binding"/>
    <property type="evidence" value="ECO:0007669"/>
    <property type="project" value="InterPro"/>
</dbReference>
<dbReference type="GO" id="GO:0000480">
    <property type="term" value="P:endonucleolytic cleavage in 5'-ETS of tricistronic rRNA transcript (SSU-rRNA, 5.8S rRNA, LSU-rRNA)"/>
    <property type="evidence" value="ECO:0007669"/>
    <property type="project" value="TreeGrafter"/>
</dbReference>
<dbReference type="GO" id="GO:0000447">
    <property type="term" value="P:endonucleolytic cleavage in ITS1 to separate SSU-rRNA from 5.8S rRNA and LSU-rRNA from tricistronic rRNA transcript (SSU-rRNA, 5.8S rRNA, LSU-rRNA)"/>
    <property type="evidence" value="ECO:0007669"/>
    <property type="project" value="TreeGrafter"/>
</dbReference>
<dbReference type="GO" id="GO:0000472">
    <property type="term" value="P:endonucleolytic cleavage to generate mature 5'-end of SSU-rRNA from (SSU-rRNA, 5.8S rRNA, LSU-rRNA)"/>
    <property type="evidence" value="ECO:0007669"/>
    <property type="project" value="TreeGrafter"/>
</dbReference>
<dbReference type="GO" id="GO:0000056">
    <property type="term" value="P:ribosomal small subunit export from nucleus"/>
    <property type="evidence" value="ECO:0007669"/>
    <property type="project" value="TreeGrafter"/>
</dbReference>
<dbReference type="Gene3D" id="1.25.10.10">
    <property type="entry name" value="Leucine-rich Repeat Variant"/>
    <property type="match status" value="3"/>
</dbReference>
<dbReference type="InterPro" id="IPR011989">
    <property type="entry name" value="ARM-like"/>
</dbReference>
<dbReference type="InterPro" id="IPR016024">
    <property type="entry name" value="ARM-type_fold"/>
</dbReference>
<dbReference type="InterPro" id="IPR040000">
    <property type="entry name" value="NOP9"/>
</dbReference>
<dbReference type="InterPro" id="IPR001313">
    <property type="entry name" value="Pumilio_RNA-bd_rpt"/>
</dbReference>
<dbReference type="PANTHER" id="PTHR13102">
    <property type="entry name" value="NUCLEOLAR PROTEIN 9"/>
    <property type="match status" value="1"/>
</dbReference>
<dbReference type="PANTHER" id="PTHR13102:SF0">
    <property type="entry name" value="NUCLEOLAR PROTEIN 9"/>
    <property type="match status" value="1"/>
</dbReference>
<dbReference type="Pfam" id="PF22493">
    <property type="entry name" value="PUF_NOP9"/>
    <property type="match status" value="1"/>
</dbReference>
<dbReference type="SMART" id="SM00025">
    <property type="entry name" value="Pumilio"/>
    <property type="match status" value="5"/>
</dbReference>
<dbReference type="SUPFAM" id="SSF48371">
    <property type="entry name" value="ARM repeat"/>
    <property type="match status" value="1"/>
</dbReference>
<feature type="chain" id="PRO_0000407796" description="Nucleolar protein 9">
    <location>
        <begin position="1"/>
        <end position="692"/>
    </location>
</feature>
<feature type="repeat" description="Pumilio 1">
    <location>
        <begin position="114"/>
        <end position="149"/>
    </location>
</feature>
<feature type="repeat" description="Pumilio 2">
    <location>
        <begin position="355"/>
        <end position="390"/>
    </location>
</feature>
<feature type="repeat" description="Pumilio 3">
    <location>
        <begin position="391"/>
        <end position="431"/>
    </location>
</feature>
<feature type="repeat" description="Pumilio 4">
    <location>
        <begin position="534"/>
        <end position="574"/>
    </location>
</feature>
<feature type="repeat" description="Pumilio 5">
    <location>
        <begin position="576"/>
        <end position="613"/>
    </location>
</feature>
<feature type="region of interest" description="Disordered" evidence="2">
    <location>
        <begin position="1"/>
        <end position="69"/>
    </location>
</feature>
<feature type="region of interest" description="Disordered" evidence="2">
    <location>
        <begin position="181"/>
        <end position="201"/>
    </location>
</feature>
<feature type="region of interest" description="Disordered" evidence="2">
    <location>
        <begin position="485"/>
        <end position="508"/>
    </location>
</feature>
<feature type="compositionally biased region" description="Basic residues" evidence="2">
    <location>
        <begin position="1"/>
        <end position="10"/>
    </location>
</feature>
<feature type="compositionally biased region" description="Basic and acidic residues" evidence="2">
    <location>
        <begin position="11"/>
        <end position="27"/>
    </location>
</feature>
<gene>
    <name type="primary">nop9</name>
    <name type="ORF">ACLA_039030</name>
</gene>
<keyword id="KW-0539">Nucleus</keyword>
<keyword id="KW-1185">Reference proteome</keyword>
<keyword id="KW-0677">Repeat</keyword>
<keyword id="KW-0690">Ribosome biogenesis</keyword>
<keyword id="KW-0698">rRNA processing</keyword>
<evidence type="ECO:0000250" key="1"/>
<evidence type="ECO:0000256" key="2">
    <source>
        <dbReference type="SAM" id="MobiDB-lite"/>
    </source>
</evidence>
<evidence type="ECO:0000305" key="3"/>
<sequence>MPREKQKRGRRAEDKSKKDAAKRKRDEDPEDLTAKRLKPATEAEVDPNNEITEGADYIPFEENREDGPPSDMPFYGLLDSEEQEYFSRANEVLESNQFQDAEERRIFIDSVYREANGKELKVACSQSCSRLMEKLISLSDMRQIRRLFNKFIGNFLHLVQHRFASHCCETLFMNAAPGVTQKTPKAKEHNMEEGEDDEPEPELSLAEMFMKVVEELEGNWGYLLTERFASHTIRVLLLVLAGEPVDLSSTDSVVASRKKERLGIVTSDAKEEKPVAERQPIPESFEATLKKIMRDMVSGLDNTYLRALATHPVGNPVLQVLVYLELSHFGKSSAKDPNSIIRRLIPDDEFDENSEGATFVRGLLYDPVGSRLLETIIRSMPGKLFKGLYKNVIRDRIGSLARNTTAGYVVLRTLERLGKDDLQNAKESITPEIPGLLERSRLVVPKVLIERCLVRGVDTSSLAQALEAAYDKDPVRRLEQILKLDPVPSEEESEEKQKQSGGNQTAAAEKLHSSLLAQTMLTAPGALSGLVYSSLLAQSSDSLLRIAKDPTASRVIQQALTVSTSTSQFRRQFTTRFTGHLTELALDNSGSHVVDALWPATQDLVFIKERMAQELLQDELTLRDSFVGRAVWRNWSMDLYKRRRGEWKAKAKGIDSNNEGQGERPKSRIDLARAKFAAKAAEESKAPVAAKI</sequence>
<organism>
    <name type="scientific">Aspergillus clavatus (strain ATCC 1007 / CBS 513.65 / DSM 816 / NCTC 3887 / NRRL 1 / QM 1276 / 107)</name>
    <dbReference type="NCBI Taxonomy" id="344612"/>
    <lineage>
        <taxon>Eukaryota</taxon>
        <taxon>Fungi</taxon>
        <taxon>Dikarya</taxon>
        <taxon>Ascomycota</taxon>
        <taxon>Pezizomycotina</taxon>
        <taxon>Eurotiomycetes</taxon>
        <taxon>Eurotiomycetidae</taxon>
        <taxon>Eurotiales</taxon>
        <taxon>Aspergillaceae</taxon>
        <taxon>Aspergillus</taxon>
        <taxon>Aspergillus subgen. Fumigati</taxon>
    </lineage>
</organism>